<reference key="1">
    <citation type="submission" date="2007-10" db="EMBL/GenBank/DDBJ databases">
        <title>Complete sequence of Desulfococcus oleovorans Hxd3.</title>
        <authorList>
            <consortium name="US DOE Joint Genome Institute"/>
            <person name="Copeland A."/>
            <person name="Lucas S."/>
            <person name="Lapidus A."/>
            <person name="Barry K."/>
            <person name="Glavina del Rio T."/>
            <person name="Dalin E."/>
            <person name="Tice H."/>
            <person name="Pitluck S."/>
            <person name="Kiss H."/>
            <person name="Brettin T."/>
            <person name="Bruce D."/>
            <person name="Detter J.C."/>
            <person name="Han C."/>
            <person name="Schmutz J."/>
            <person name="Larimer F."/>
            <person name="Land M."/>
            <person name="Hauser L."/>
            <person name="Kyrpides N."/>
            <person name="Kim E."/>
            <person name="Wawrik B."/>
            <person name="Richardson P."/>
        </authorList>
    </citation>
    <scope>NUCLEOTIDE SEQUENCE [LARGE SCALE GENOMIC DNA]</scope>
    <source>
        <strain>DSM 6200 / JCM 39069 / Hxd3</strain>
    </source>
</reference>
<gene>
    <name evidence="1" type="primary">pcm</name>
    <name type="ordered locus">Dole_2742</name>
</gene>
<protein>
    <recommendedName>
        <fullName evidence="1">Protein-L-isoaspartate O-methyltransferase</fullName>
        <ecNumber evidence="1">2.1.1.77</ecNumber>
    </recommendedName>
    <alternativeName>
        <fullName evidence="1">L-isoaspartyl protein carboxyl methyltransferase</fullName>
    </alternativeName>
    <alternativeName>
        <fullName evidence="1">Protein L-isoaspartyl methyltransferase</fullName>
    </alternativeName>
    <alternativeName>
        <fullName evidence="1">Protein-beta-aspartate methyltransferase</fullName>
        <shortName evidence="1">PIMT</shortName>
    </alternativeName>
</protein>
<proteinExistence type="inferred from homology"/>
<organism>
    <name type="scientific">Desulfosudis oleivorans (strain DSM 6200 / JCM 39069 / Hxd3)</name>
    <name type="common">Desulfococcus oleovorans</name>
    <dbReference type="NCBI Taxonomy" id="96561"/>
    <lineage>
        <taxon>Bacteria</taxon>
        <taxon>Pseudomonadati</taxon>
        <taxon>Thermodesulfobacteriota</taxon>
        <taxon>Desulfobacteria</taxon>
        <taxon>Desulfobacterales</taxon>
        <taxon>Desulfosudaceae</taxon>
        <taxon>Desulfosudis</taxon>
    </lineage>
</organism>
<name>PIMT_DESOH</name>
<keyword id="KW-0963">Cytoplasm</keyword>
<keyword id="KW-0489">Methyltransferase</keyword>
<keyword id="KW-1185">Reference proteome</keyword>
<keyword id="KW-0949">S-adenosyl-L-methionine</keyword>
<keyword id="KW-0808">Transferase</keyword>
<comment type="function">
    <text evidence="1">Catalyzes the methyl esterification of L-isoaspartyl residues in peptides and proteins that result from spontaneous decomposition of normal L-aspartyl and L-asparaginyl residues. It plays a role in the repair and/or degradation of damaged proteins.</text>
</comment>
<comment type="catalytic activity">
    <reaction evidence="1">
        <text>[protein]-L-isoaspartate + S-adenosyl-L-methionine = [protein]-L-isoaspartate alpha-methyl ester + S-adenosyl-L-homocysteine</text>
        <dbReference type="Rhea" id="RHEA:12705"/>
        <dbReference type="Rhea" id="RHEA-COMP:12143"/>
        <dbReference type="Rhea" id="RHEA-COMP:12144"/>
        <dbReference type="ChEBI" id="CHEBI:57856"/>
        <dbReference type="ChEBI" id="CHEBI:59789"/>
        <dbReference type="ChEBI" id="CHEBI:90596"/>
        <dbReference type="ChEBI" id="CHEBI:90598"/>
        <dbReference type="EC" id="2.1.1.77"/>
    </reaction>
</comment>
<comment type="subcellular location">
    <subcellularLocation>
        <location evidence="1">Cytoplasm</location>
    </subcellularLocation>
</comment>
<comment type="similarity">
    <text evidence="1">Belongs to the methyltransferase superfamily. L-isoaspartyl/D-aspartyl protein methyltransferase family.</text>
</comment>
<sequence length="221" mass="24571">MVMENEEIRYVRRRKQMVENQIARRGINDPFVLGAMGTVPRHLFVSEALMDQAYGDFPLPIGEQQTISQPYIVAEMTQALEPTGNDRVLEIGTGSGYQAAILSRIVSRVYTVERIHSLYIRARALFDRLGYYNIATRYSDGTTGWKAESPFDRIIITAGAPDIPSVLVDQLAVGGRLVAPVGTESVQSLIKLVKEKTGVRSTDLGGCRFVKLIGEHGWKEN</sequence>
<evidence type="ECO:0000255" key="1">
    <source>
        <dbReference type="HAMAP-Rule" id="MF_00090"/>
    </source>
</evidence>
<feature type="chain" id="PRO_0000351851" description="Protein-L-isoaspartate O-methyltransferase">
    <location>
        <begin position="1"/>
        <end position="221"/>
    </location>
</feature>
<feature type="active site" evidence="1">
    <location>
        <position position="68"/>
    </location>
</feature>
<accession>A8ZXR8</accession>
<dbReference type="EC" id="2.1.1.77" evidence="1"/>
<dbReference type="EMBL" id="CP000859">
    <property type="protein sequence ID" value="ABW68545.1"/>
    <property type="molecule type" value="Genomic_DNA"/>
</dbReference>
<dbReference type="RefSeq" id="WP_012176156.1">
    <property type="nucleotide sequence ID" value="NC_009943.1"/>
</dbReference>
<dbReference type="SMR" id="A8ZXR8"/>
<dbReference type="STRING" id="96561.Dole_2742"/>
<dbReference type="KEGG" id="dol:Dole_2742"/>
<dbReference type="eggNOG" id="COG2518">
    <property type="taxonomic scope" value="Bacteria"/>
</dbReference>
<dbReference type="HOGENOM" id="CLU_055432_2_0_7"/>
<dbReference type="OrthoDB" id="9810066at2"/>
<dbReference type="Proteomes" id="UP000008561">
    <property type="component" value="Chromosome"/>
</dbReference>
<dbReference type="GO" id="GO:0005737">
    <property type="term" value="C:cytoplasm"/>
    <property type="evidence" value="ECO:0007669"/>
    <property type="project" value="UniProtKB-SubCell"/>
</dbReference>
<dbReference type="GO" id="GO:0004719">
    <property type="term" value="F:protein-L-isoaspartate (D-aspartate) O-methyltransferase activity"/>
    <property type="evidence" value="ECO:0007669"/>
    <property type="project" value="UniProtKB-UniRule"/>
</dbReference>
<dbReference type="GO" id="GO:0032259">
    <property type="term" value="P:methylation"/>
    <property type="evidence" value="ECO:0007669"/>
    <property type="project" value="UniProtKB-KW"/>
</dbReference>
<dbReference type="GO" id="GO:0036211">
    <property type="term" value="P:protein modification process"/>
    <property type="evidence" value="ECO:0007669"/>
    <property type="project" value="UniProtKB-UniRule"/>
</dbReference>
<dbReference type="GO" id="GO:0030091">
    <property type="term" value="P:protein repair"/>
    <property type="evidence" value="ECO:0007669"/>
    <property type="project" value="UniProtKB-UniRule"/>
</dbReference>
<dbReference type="CDD" id="cd02440">
    <property type="entry name" value="AdoMet_MTases"/>
    <property type="match status" value="1"/>
</dbReference>
<dbReference type="FunFam" id="3.40.50.150:FF:000010">
    <property type="entry name" value="Protein-L-isoaspartate O-methyltransferase"/>
    <property type="match status" value="1"/>
</dbReference>
<dbReference type="Gene3D" id="3.40.50.150">
    <property type="entry name" value="Vaccinia Virus protein VP39"/>
    <property type="match status" value="1"/>
</dbReference>
<dbReference type="HAMAP" id="MF_00090">
    <property type="entry name" value="PIMT"/>
    <property type="match status" value="1"/>
</dbReference>
<dbReference type="InterPro" id="IPR000682">
    <property type="entry name" value="PCMT"/>
</dbReference>
<dbReference type="InterPro" id="IPR029063">
    <property type="entry name" value="SAM-dependent_MTases_sf"/>
</dbReference>
<dbReference type="NCBIfam" id="TIGR00080">
    <property type="entry name" value="pimt"/>
    <property type="match status" value="1"/>
</dbReference>
<dbReference type="NCBIfam" id="NF001453">
    <property type="entry name" value="PRK00312.1"/>
    <property type="match status" value="1"/>
</dbReference>
<dbReference type="PANTHER" id="PTHR11579">
    <property type="entry name" value="PROTEIN-L-ISOASPARTATE O-METHYLTRANSFERASE"/>
    <property type="match status" value="1"/>
</dbReference>
<dbReference type="PANTHER" id="PTHR11579:SF0">
    <property type="entry name" value="PROTEIN-L-ISOASPARTATE(D-ASPARTATE) O-METHYLTRANSFERASE"/>
    <property type="match status" value="1"/>
</dbReference>
<dbReference type="Pfam" id="PF01135">
    <property type="entry name" value="PCMT"/>
    <property type="match status" value="1"/>
</dbReference>
<dbReference type="SUPFAM" id="SSF53335">
    <property type="entry name" value="S-adenosyl-L-methionine-dependent methyltransferases"/>
    <property type="match status" value="1"/>
</dbReference>
<dbReference type="PROSITE" id="PS01279">
    <property type="entry name" value="PCMT"/>
    <property type="match status" value="1"/>
</dbReference>